<organism>
    <name type="scientific">Nitratidesulfovibrio vulgaris (strain ATCC 29579 / DSM 644 / CCUG 34227 / NCIMB 8303 / VKM B-1760 / Hildenborough)</name>
    <name type="common">Desulfovibrio vulgaris</name>
    <dbReference type="NCBI Taxonomy" id="882"/>
    <lineage>
        <taxon>Bacteria</taxon>
        <taxon>Pseudomonadati</taxon>
        <taxon>Thermodesulfobacteriota</taxon>
        <taxon>Desulfovibrionia</taxon>
        <taxon>Desulfovibrionales</taxon>
        <taxon>Desulfovibrionaceae</taxon>
        <taxon>Nitratidesulfovibrio</taxon>
    </lineage>
</organism>
<keyword id="KW-0997">Cell inner membrane</keyword>
<keyword id="KW-1003">Cell membrane</keyword>
<keyword id="KW-0472">Membrane</keyword>
<keyword id="KW-1185">Reference proteome</keyword>
<keyword id="KW-0808">Transferase</keyword>
<keyword id="KW-0812">Transmembrane</keyword>
<keyword id="KW-1133">Transmembrane helix</keyword>
<sequence>MLTFPRIDPVAITLGPLQFRWYGLMYLFGFLSGWWLGRRRAAQPGSRWTGEMVDDMVTYVILGVVLGGRIGYILFYDLAYYLGNPTQIFSIWNGGMSFHGGLLGVVFAMWLLGRRNGLGFMDVSDFVAPLIPPGLFFGRIGNFINGELWGKHTTLPWGMVFPDGGPFPRHPSQLYECALEGVILFLALWVFSSRKRPTGHVSGLFALLYGVFRFTVEFVREPDVQLGYLAFGWLTMGQVLCLPLIMLGLWLLRPGGDKGTKAA</sequence>
<protein>
    <recommendedName>
        <fullName evidence="1">Phosphatidylglycerol--prolipoprotein diacylglyceryl transferase</fullName>
        <ecNumber evidence="1">2.5.1.145</ecNumber>
    </recommendedName>
</protein>
<evidence type="ECO:0000255" key="1">
    <source>
        <dbReference type="HAMAP-Rule" id="MF_01147"/>
    </source>
</evidence>
<comment type="function">
    <text evidence="1">Catalyzes the transfer of the diacylglyceryl group from phosphatidylglycerol to the sulfhydryl group of the N-terminal cysteine of a prolipoprotein, the first step in the formation of mature lipoproteins.</text>
</comment>
<comment type="catalytic activity">
    <reaction evidence="1">
        <text>L-cysteinyl-[prolipoprotein] + a 1,2-diacyl-sn-glycero-3-phospho-(1'-sn-glycerol) = an S-1,2-diacyl-sn-glyceryl-L-cysteinyl-[prolipoprotein] + sn-glycerol 1-phosphate + H(+)</text>
        <dbReference type="Rhea" id="RHEA:56712"/>
        <dbReference type="Rhea" id="RHEA-COMP:14679"/>
        <dbReference type="Rhea" id="RHEA-COMP:14680"/>
        <dbReference type="ChEBI" id="CHEBI:15378"/>
        <dbReference type="ChEBI" id="CHEBI:29950"/>
        <dbReference type="ChEBI" id="CHEBI:57685"/>
        <dbReference type="ChEBI" id="CHEBI:64716"/>
        <dbReference type="ChEBI" id="CHEBI:140658"/>
        <dbReference type="EC" id="2.5.1.145"/>
    </reaction>
</comment>
<comment type="pathway">
    <text evidence="1">Protein modification; lipoprotein biosynthesis (diacylglyceryl transfer).</text>
</comment>
<comment type="subcellular location">
    <subcellularLocation>
        <location evidence="1">Cell inner membrane</location>
        <topology evidence="1">Multi-pass membrane protein</topology>
    </subcellularLocation>
</comment>
<comment type="similarity">
    <text evidence="1">Belongs to the Lgt family.</text>
</comment>
<feature type="chain" id="PRO_0000172595" description="Phosphatidylglycerol--prolipoprotein diacylglyceryl transferase">
    <location>
        <begin position="1"/>
        <end position="263"/>
    </location>
</feature>
<feature type="transmembrane region" description="Helical" evidence="1">
    <location>
        <begin position="10"/>
        <end position="30"/>
    </location>
</feature>
<feature type="transmembrane region" description="Helical" evidence="1">
    <location>
        <begin position="56"/>
        <end position="76"/>
    </location>
</feature>
<feature type="transmembrane region" description="Helical" evidence="1">
    <location>
        <begin position="91"/>
        <end position="111"/>
    </location>
</feature>
<feature type="transmembrane region" description="Helical" evidence="1">
    <location>
        <begin position="117"/>
        <end position="137"/>
    </location>
</feature>
<feature type="transmembrane region" description="Helical" evidence="1">
    <location>
        <begin position="171"/>
        <end position="191"/>
    </location>
</feature>
<feature type="transmembrane region" description="Helical" evidence="1">
    <location>
        <begin position="199"/>
        <end position="219"/>
    </location>
</feature>
<feature type="transmembrane region" description="Helical" evidence="1">
    <location>
        <begin position="231"/>
        <end position="251"/>
    </location>
</feature>
<feature type="binding site" evidence="1">
    <location>
        <position position="139"/>
    </location>
    <ligand>
        <name>a 1,2-diacyl-sn-glycero-3-phospho-(1'-sn-glycerol)</name>
        <dbReference type="ChEBI" id="CHEBI:64716"/>
    </ligand>
</feature>
<accession>Q72G45</accession>
<reference key="1">
    <citation type="journal article" date="2004" name="Nat. Biotechnol.">
        <title>The genome sequence of the anaerobic, sulfate-reducing bacterium Desulfovibrio vulgaris Hildenborough.</title>
        <authorList>
            <person name="Heidelberg J.F."/>
            <person name="Seshadri R."/>
            <person name="Haveman S.A."/>
            <person name="Hemme C.L."/>
            <person name="Paulsen I.T."/>
            <person name="Kolonay J.F."/>
            <person name="Eisen J.A."/>
            <person name="Ward N.L."/>
            <person name="Methe B.A."/>
            <person name="Brinkac L.M."/>
            <person name="Daugherty S.C."/>
            <person name="DeBoy R.T."/>
            <person name="Dodson R.J."/>
            <person name="Durkin A.S."/>
            <person name="Madupu R."/>
            <person name="Nelson W.C."/>
            <person name="Sullivan S.A."/>
            <person name="Fouts D.E."/>
            <person name="Haft D.H."/>
            <person name="Selengut J."/>
            <person name="Peterson J.D."/>
            <person name="Davidsen T.M."/>
            <person name="Zafar N."/>
            <person name="Zhou L."/>
            <person name="Radune D."/>
            <person name="Dimitrov G."/>
            <person name="Hance M."/>
            <person name="Tran K."/>
            <person name="Khouri H.M."/>
            <person name="Gill J."/>
            <person name="Utterback T.R."/>
            <person name="Feldblyum T.V."/>
            <person name="Wall J.D."/>
            <person name="Voordouw G."/>
            <person name="Fraser C.M."/>
        </authorList>
    </citation>
    <scope>NUCLEOTIDE SEQUENCE [LARGE SCALE GENOMIC DNA]</scope>
    <source>
        <strain>ATCC 29579 / DSM 644 / CCUG 34227 / NCIMB 8303 / VKM B-1760 / Hildenborough</strain>
    </source>
</reference>
<name>LGT_NITV2</name>
<proteinExistence type="inferred from homology"/>
<gene>
    <name evidence="1" type="primary">lgt</name>
    <name type="ordered locus">DVU_0015</name>
</gene>
<dbReference type="EC" id="2.5.1.145" evidence="1"/>
<dbReference type="EMBL" id="AE017285">
    <property type="protein sequence ID" value="AAS94499.1"/>
    <property type="molecule type" value="Genomic_DNA"/>
</dbReference>
<dbReference type="RefSeq" id="WP_010937326.1">
    <property type="nucleotide sequence ID" value="NC_002937.3"/>
</dbReference>
<dbReference type="RefSeq" id="YP_009240.1">
    <property type="nucleotide sequence ID" value="NC_002937.3"/>
</dbReference>
<dbReference type="SMR" id="Q72G45"/>
<dbReference type="STRING" id="882.DVU_0015"/>
<dbReference type="PaxDb" id="882-DVU_0015"/>
<dbReference type="EnsemblBacteria" id="AAS94499">
    <property type="protein sequence ID" value="AAS94499"/>
    <property type="gene ID" value="DVU_0015"/>
</dbReference>
<dbReference type="KEGG" id="dvu:DVU_0015"/>
<dbReference type="PATRIC" id="fig|882.5.peg.14"/>
<dbReference type="eggNOG" id="COG0682">
    <property type="taxonomic scope" value="Bacteria"/>
</dbReference>
<dbReference type="HOGENOM" id="CLU_013386_1_0_7"/>
<dbReference type="OrthoDB" id="871140at2"/>
<dbReference type="PhylomeDB" id="Q72G45"/>
<dbReference type="UniPathway" id="UPA00664"/>
<dbReference type="Proteomes" id="UP000002194">
    <property type="component" value="Chromosome"/>
</dbReference>
<dbReference type="GO" id="GO:0005886">
    <property type="term" value="C:plasma membrane"/>
    <property type="evidence" value="ECO:0007669"/>
    <property type="project" value="UniProtKB-SubCell"/>
</dbReference>
<dbReference type="GO" id="GO:0008961">
    <property type="term" value="F:phosphatidylglycerol-prolipoprotein diacylglyceryl transferase activity"/>
    <property type="evidence" value="ECO:0007669"/>
    <property type="project" value="UniProtKB-UniRule"/>
</dbReference>
<dbReference type="GO" id="GO:0042158">
    <property type="term" value="P:lipoprotein biosynthetic process"/>
    <property type="evidence" value="ECO:0007669"/>
    <property type="project" value="UniProtKB-UniRule"/>
</dbReference>
<dbReference type="HAMAP" id="MF_01147">
    <property type="entry name" value="Lgt"/>
    <property type="match status" value="1"/>
</dbReference>
<dbReference type="InterPro" id="IPR001640">
    <property type="entry name" value="Lgt"/>
</dbReference>
<dbReference type="NCBIfam" id="TIGR00544">
    <property type="entry name" value="lgt"/>
    <property type="match status" value="1"/>
</dbReference>
<dbReference type="PANTHER" id="PTHR30589:SF0">
    <property type="entry name" value="PHOSPHATIDYLGLYCEROL--PROLIPOPROTEIN DIACYLGLYCERYL TRANSFERASE"/>
    <property type="match status" value="1"/>
</dbReference>
<dbReference type="PANTHER" id="PTHR30589">
    <property type="entry name" value="PROLIPOPROTEIN DIACYLGLYCERYL TRANSFERASE"/>
    <property type="match status" value="1"/>
</dbReference>
<dbReference type="Pfam" id="PF01790">
    <property type="entry name" value="LGT"/>
    <property type="match status" value="1"/>
</dbReference>
<dbReference type="PROSITE" id="PS01311">
    <property type="entry name" value="LGT"/>
    <property type="match status" value="1"/>
</dbReference>